<dbReference type="EMBL" id="U35250">
    <property type="protein sequence ID" value="AAB41909.1"/>
    <property type="molecule type" value="mRNA"/>
</dbReference>
<dbReference type="EMBL" id="U35250">
    <property type="protein sequence ID" value="AAB41910.1"/>
    <property type="molecule type" value="mRNA"/>
</dbReference>
<dbReference type="EMBL" id="D86740">
    <property type="protein sequence ID" value="BAA13164.1"/>
    <property type="molecule type" value="mRNA"/>
</dbReference>
<dbReference type="EMBL" id="D86741">
    <property type="protein sequence ID" value="BAA21840.1"/>
    <property type="molecule type" value="mRNA"/>
</dbReference>
<dbReference type="EMBL" id="FO080514">
    <property type="protein sequence ID" value="CCD64307.1"/>
    <property type="molecule type" value="Genomic_DNA"/>
</dbReference>
<dbReference type="EMBL" id="FO080514">
    <property type="protein sequence ID" value="CCD64308.1"/>
    <property type="molecule type" value="Genomic_DNA"/>
</dbReference>
<dbReference type="PIR" id="JC5078">
    <property type="entry name" value="JC5078"/>
</dbReference>
<dbReference type="RefSeq" id="NP_001024393.1">
    <molecule id="Q10901-1"/>
    <property type="nucleotide sequence ID" value="NM_001029222.4"/>
</dbReference>
<dbReference type="RefSeq" id="NP_001024394.1">
    <molecule id="Q10901-2"/>
    <property type="nucleotide sequence ID" value="NM_001029223.6"/>
</dbReference>
<dbReference type="SMR" id="Q10901"/>
<dbReference type="BioGRID" id="45579">
    <property type="interactions" value="7"/>
</dbReference>
<dbReference type="FunCoup" id="Q10901">
    <property type="interactions" value="226"/>
</dbReference>
<dbReference type="STRING" id="6239.C12D12.2a.1"/>
<dbReference type="TCDB" id="2.A.23.2.10">
    <property type="family name" value="the dicarboxylate/amino acid:cation (na(+) or h(+)) symporter (daacs) family"/>
</dbReference>
<dbReference type="GlyCosmos" id="Q10901">
    <property type="glycosylation" value="2 sites, No reported glycans"/>
</dbReference>
<dbReference type="iPTMnet" id="Q10901"/>
<dbReference type="PaxDb" id="6239-C12D12.2a"/>
<dbReference type="PeptideAtlas" id="Q10901"/>
<dbReference type="EnsemblMetazoa" id="C12D12.2a.1">
    <molecule id="Q10901-1"/>
    <property type="protein sequence ID" value="C12D12.2a.1"/>
    <property type="gene ID" value="WBGene00001620"/>
</dbReference>
<dbReference type="EnsemblMetazoa" id="C12D12.2b.1">
    <molecule id="Q10901-2"/>
    <property type="protein sequence ID" value="C12D12.2b.1"/>
    <property type="gene ID" value="WBGene00001620"/>
</dbReference>
<dbReference type="GeneID" id="180641"/>
<dbReference type="KEGG" id="cel:CELE_C12D12.2"/>
<dbReference type="UCSC" id="C12D12.2b.3">
    <molecule id="Q10901-1"/>
    <property type="organism name" value="c. elegans"/>
</dbReference>
<dbReference type="AGR" id="WB:WBGene00001620"/>
<dbReference type="CTD" id="180641"/>
<dbReference type="WormBase" id="C12D12.2a">
    <molecule id="Q10901-1"/>
    <property type="protein sequence ID" value="CE29083"/>
    <property type="gene ID" value="WBGene00001620"/>
    <property type="gene designation" value="glt-1"/>
</dbReference>
<dbReference type="WormBase" id="C12D12.2b">
    <molecule id="Q10901-2"/>
    <property type="protein sequence ID" value="CE29084"/>
    <property type="gene ID" value="WBGene00001620"/>
    <property type="gene designation" value="glt-1"/>
</dbReference>
<dbReference type="eggNOG" id="KOG3787">
    <property type="taxonomic scope" value="Eukaryota"/>
</dbReference>
<dbReference type="GeneTree" id="ENSGT00940000167643"/>
<dbReference type="HOGENOM" id="CLU_019375_3_0_1"/>
<dbReference type="InParanoid" id="Q10901"/>
<dbReference type="OMA" id="QFFVIMD"/>
<dbReference type="OrthoDB" id="5877963at2759"/>
<dbReference type="PhylomeDB" id="Q10901"/>
<dbReference type="Reactome" id="R-CEL-210455">
    <property type="pathway name" value="Astrocytic Glutamate-Glutamine Uptake And Metabolism"/>
</dbReference>
<dbReference type="Reactome" id="R-CEL-210500">
    <property type="pathway name" value="Glutamate Neurotransmitter Release Cycle"/>
</dbReference>
<dbReference type="Reactome" id="R-CEL-352230">
    <property type="pathway name" value="Amino acid transport across the plasma membrane"/>
</dbReference>
<dbReference type="Reactome" id="R-CEL-425393">
    <property type="pathway name" value="Transport of inorganic cations/anions and amino acids/oligopeptides"/>
</dbReference>
<dbReference type="Reactome" id="R-CEL-9013149">
    <property type="pathway name" value="RAC1 GTPase cycle"/>
</dbReference>
<dbReference type="Reactome" id="R-CEL-9013406">
    <property type="pathway name" value="RHOQ GTPase cycle"/>
</dbReference>
<dbReference type="Reactome" id="R-CEL-9013407">
    <property type="pathway name" value="RHOH GTPase cycle"/>
</dbReference>
<dbReference type="Reactome" id="R-CEL-9013423">
    <property type="pathway name" value="RAC3 GTPase cycle"/>
</dbReference>
<dbReference type="PRO" id="PR:Q10901"/>
<dbReference type="Proteomes" id="UP000001940">
    <property type="component" value="Chromosome X"/>
</dbReference>
<dbReference type="Bgee" id="WBGene00001620">
    <property type="expression patterns" value="Expressed in larva and 4 other cell types or tissues"/>
</dbReference>
<dbReference type="GO" id="GO:0042995">
    <property type="term" value="C:cell projection"/>
    <property type="evidence" value="ECO:0000314"/>
    <property type="project" value="WormBase"/>
</dbReference>
<dbReference type="GO" id="GO:0005886">
    <property type="term" value="C:plasma membrane"/>
    <property type="evidence" value="ECO:0000250"/>
    <property type="project" value="WormBase"/>
</dbReference>
<dbReference type="GO" id="GO:0015501">
    <property type="term" value="F:glutamate:sodium symporter activity"/>
    <property type="evidence" value="ECO:0000318"/>
    <property type="project" value="GO_Central"/>
</dbReference>
<dbReference type="GO" id="GO:0005313">
    <property type="term" value="F:L-glutamate transmembrane transporter activity"/>
    <property type="evidence" value="ECO:0000314"/>
    <property type="project" value="WormBase"/>
</dbReference>
<dbReference type="GO" id="GO:0015175">
    <property type="term" value="F:neutral L-amino acid transmembrane transporter activity"/>
    <property type="evidence" value="ECO:0000318"/>
    <property type="project" value="GO_Central"/>
</dbReference>
<dbReference type="GO" id="GO:0015813">
    <property type="term" value="P:L-glutamate transmembrane transport"/>
    <property type="evidence" value="ECO:0000318"/>
    <property type="project" value="GO_Central"/>
</dbReference>
<dbReference type="FunFam" id="1.10.3860.10:FF:000002">
    <property type="entry name" value="Amino acid transporter"/>
    <property type="match status" value="1"/>
</dbReference>
<dbReference type="Gene3D" id="1.10.3860.10">
    <property type="entry name" value="Sodium:dicarboxylate symporter"/>
    <property type="match status" value="1"/>
</dbReference>
<dbReference type="InterPro" id="IPR050746">
    <property type="entry name" value="DAACS"/>
</dbReference>
<dbReference type="InterPro" id="IPR001991">
    <property type="entry name" value="Na-dicarboxylate_symporter"/>
</dbReference>
<dbReference type="InterPro" id="IPR018107">
    <property type="entry name" value="Na-dicarboxylate_symporter_CS"/>
</dbReference>
<dbReference type="InterPro" id="IPR036458">
    <property type="entry name" value="Na:dicarbo_symporter_sf"/>
</dbReference>
<dbReference type="PANTHER" id="PTHR11958:SF110">
    <property type="entry name" value="EXCITATORY AMINO ACID TRANSPORTER"/>
    <property type="match status" value="1"/>
</dbReference>
<dbReference type="PANTHER" id="PTHR11958">
    <property type="entry name" value="SODIUM/DICARBOXYLATE SYMPORTER-RELATED"/>
    <property type="match status" value="1"/>
</dbReference>
<dbReference type="Pfam" id="PF00375">
    <property type="entry name" value="SDF"/>
    <property type="match status" value="1"/>
</dbReference>
<dbReference type="PRINTS" id="PR00173">
    <property type="entry name" value="EDTRNSPORT"/>
</dbReference>
<dbReference type="SUPFAM" id="SSF118215">
    <property type="entry name" value="Proton glutamate symport protein"/>
    <property type="match status" value="1"/>
</dbReference>
<dbReference type="PROSITE" id="PS00713">
    <property type="entry name" value="NA_DICARBOXYL_SYMP_1"/>
    <property type="match status" value="1"/>
</dbReference>
<dbReference type="PROSITE" id="PS00714">
    <property type="entry name" value="NA_DICARBOXYL_SYMP_2"/>
    <property type="match status" value="1"/>
</dbReference>
<accession>Q10901</accession>
<accession>P90798</accession>
<accession>Q17920</accession>
<keyword id="KW-0025">Alternative splicing</keyword>
<keyword id="KW-0325">Glycoprotein</keyword>
<keyword id="KW-0472">Membrane</keyword>
<keyword id="KW-1185">Reference proteome</keyword>
<keyword id="KW-0769">Symport</keyword>
<keyword id="KW-0812">Transmembrane</keyword>
<keyword id="KW-1133">Transmembrane helix</keyword>
<keyword id="KW-0813">Transport</keyword>
<protein>
    <recommendedName>
        <fullName>Excitatory amino acid transporter</fullName>
    </recommendedName>
    <alternativeName>
        <fullName>Sodium-dependent glutamate/ aspartate transporter</fullName>
    </alternativeName>
</protein>
<gene>
    <name type="primary">glt-1</name>
    <name type="ORF">C12D12.2</name>
</gene>
<name>EAA1_CAEEL</name>
<reference key="1">
    <citation type="journal article" date="1996" name="Mol. Biochem. Parasitol.">
        <title>Cloning and characterization of cDNAs encoding putative glutamate transporters from Caenorhabditis elegans and Onchocerca volvulus.</title>
        <authorList>
            <person name="Radice A.D."/>
            <person name="Lustigman S."/>
        </authorList>
    </citation>
    <scope>NUCLEOTIDE SEQUENCE [MRNA] (ISOFORMS A AND B)</scope>
    <source>
        <strain>Bristol N2</strain>
    </source>
</reference>
<reference key="2">
    <citation type="journal article" date="1996" name="Biochem. Biophys. Res. Commun.">
        <title>Molecular cloning of a cDNA for the glutamate transporter of the nematode Caenorhabditis elegans.</title>
        <authorList>
            <person name="Kawano T."/>
            <person name="Takuwa K."/>
            <person name="Nakajima T."/>
        </authorList>
    </citation>
    <scope>NUCLEOTIDE SEQUENCE [MRNA] (ISOFORM A)</scope>
    <source>
        <strain>Bristol N2</strain>
    </source>
</reference>
<reference key="3">
    <citation type="journal article" date="1997" name="Biosci. Biotechnol. Biochem.">
        <title>Structure and activity of a new form of the glutamate transporter of the nematode Caenorhabditis elegans.</title>
        <authorList>
            <person name="Kawano T."/>
            <person name="Takuwa K."/>
            <person name="Nakajima T."/>
        </authorList>
    </citation>
    <scope>NUCLEOTIDE SEQUENCE [MRNA] (ISOFORM A)</scope>
    <source>
        <strain>Bristol N2</strain>
    </source>
</reference>
<reference key="4">
    <citation type="journal article" date="1998" name="Science">
        <title>Genome sequence of the nematode C. elegans: a platform for investigating biology.</title>
        <authorList>
            <consortium name="The C. elegans sequencing consortium"/>
        </authorList>
    </citation>
    <scope>NUCLEOTIDE SEQUENCE [LARGE SCALE GENOMIC DNA]</scope>
    <source>
        <strain>Bristol N2</strain>
    </source>
</reference>
<reference key="5">
    <citation type="journal article" date="2005" name="Glycobiology">
        <title>Identification of the hydrophobic glycoproteins of Caenorhabditis elegans.</title>
        <authorList>
            <person name="Fan X."/>
            <person name="She Y.-M."/>
            <person name="Bagshaw R.D."/>
            <person name="Callahan J.W."/>
            <person name="Schachter H."/>
            <person name="Mahuran D.J."/>
        </authorList>
    </citation>
    <scope>GLYCOSYLATION [LARGE SCALE ANALYSIS] AT ASN-177 AND ASN-187</scope>
    <scope>IDENTIFICATION BY MASS SPECTROMETRY</scope>
</reference>
<proteinExistence type="evidence at protein level"/>
<sequence length="503" mass="54676">MPPDTRINKEIMVSWIRKNLLLVLTVSSVVLGALCGFLLRGLQLSPQNIMYISFPGELLMHMLKMMILPLIMSSLISGLAQLDARQSGKLGSLAVTYYMFTTAVAVVTGIFLVLVIHPGDPTIKKEIGTGTEGKTVSTVDTLLDLLRNMFPENVVQATFQQVQTKYIKVRPKVVKNNDSATLAALNNGSLDYVKASVEYTSGMNVLGVIVFCIAIGISLSQLGQEAHVMVQFFVIMDKVIMKLVMTVMWYSPFGIFCLIMGKILEIHDLADTARMLAMYMVTVLSGLAIHSLISLPLIFFVTTKKNPYVFMRGLFQAWITALGTASSSATLPITFNCLEENLGVDRRVTRFVLPVGATINMDGTALYEAVAAIFIAQINGVHLSFGQVVTVSLTATLASIGAASVPSAGLVTMLLVLTAVGLPVKDVSLIVAVDWLLDRIRTSINVLGDAMGAGIVYHYSKADLDAHDRLAATTRSHSIAMNDEKRQLAVYNSLPTDDEKHTH</sequence>
<evidence type="ECO:0000250" key="1"/>
<evidence type="ECO:0000255" key="2"/>
<evidence type="ECO:0000269" key="3">
    <source>
    </source>
</evidence>
<evidence type="ECO:0000303" key="4">
    <source>
    </source>
</evidence>
<evidence type="ECO:0000305" key="5"/>
<feature type="chain" id="PRO_0000202074" description="Excitatory amino acid transporter">
    <location>
        <begin position="1"/>
        <end position="503"/>
    </location>
</feature>
<feature type="topological domain" description="Cytoplasmic" evidence="2">
    <location>
        <begin position="1"/>
        <end position="18"/>
    </location>
</feature>
<feature type="transmembrane region" description="Helical" evidence="2">
    <location>
        <begin position="19"/>
        <end position="39"/>
    </location>
</feature>
<feature type="transmembrane region" description="Helical" evidence="2">
    <location>
        <begin position="59"/>
        <end position="79"/>
    </location>
</feature>
<feature type="transmembrane region" description="Helical" evidence="2">
    <location>
        <begin position="96"/>
        <end position="116"/>
    </location>
</feature>
<feature type="topological domain" description="Extracellular" evidence="2">
    <location>
        <begin position="117"/>
        <end position="198"/>
    </location>
</feature>
<feature type="transmembrane region" description="Helical" evidence="2">
    <location>
        <begin position="199"/>
        <end position="219"/>
    </location>
</feature>
<feature type="transmembrane region" description="Helical" evidence="2">
    <location>
        <begin position="239"/>
        <end position="259"/>
    </location>
</feature>
<feature type="transmembrane region" description="Helical" evidence="2">
    <location>
        <begin position="281"/>
        <end position="301"/>
    </location>
</feature>
<feature type="transmembrane region" description="Helical" evidence="2">
    <location>
        <begin position="369"/>
        <end position="389"/>
    </location>
</feature>
<feature type="transmembrane region" description="Helical" evidence="2">
    <location>
        <begin position="400"/>
        <end position="420"/>
    </location>
</feature>
<feature type="glycosylation site" description="N-linked (GlcNAc...) asparagine" evidence="3">
    <location>
        <position position="177"/>
    </location>
</feature>
<feature type="glycosylation site" description="N-linked (GlcNAc...) asparagine" evidence="3">
    <location>
        <position position="187"/>
    </location>
</feature>
<feature type="splice variant" id="VSP_006267" description="In isoform b." evidence="4">
    <location>
        <begin position="1"/>
        <end position="11"/>
    </location>
</feature>
<feature type="sequence conflict" description="In Ref. 1; AAB41909/AAB41910." evidence="5" ref="1">
    <original>L</original>
    <variation>P</variation>
    <location>
        <position position="68"/>
    </location>
</feature>
<feature type="sequence conflict" description="In Ref. 1; AAB41909/AAB41910." evidence="5" ref="1">
    <original>ADTA</original>
    <variation>ENTT</variation>
    <location>
        <begin position="270"/>
        <end position="273"/>
    </location>
</feature>
<feature type="sequence conflict" description="In Ref. 1; AAB41909/AAB41910." evidence="5" ref="1">
    <original>A</original>
    <variation>G</variation>
    <location>
        <position position="321"/>
    </location>
</feature>
<organism>
    <name type="scientific">Caenorhabditis elegans</name>
    <dbReference type="NCBI Taxonomy" id="6239"/>
    <lineage>
        <taxon>Eukaryota</taxon>
        <taxon>Metazoa</taxon>
        <taxon>Ecdysozoa</taxon>
        <taxon>Nematoda</taxon>
        <taxon>Chromadorea</taxon>
        <taxon>Rhabditida</taxon>
        <taxon>Rhabditina</taxon>
        <taxon>Rhabditomorpha</taxon>
        <taxon>Rhabditoidea</taxon>
        <taxon>Rhabditidae</taxon>
        <taxon>Peloderinae</taxon>
        <taxon>Caenorhabditis</taxon>
    </lineage>
</organism>
<comment type="function">
    <text evidence="1">Transports L-glutamate and also L- and D-aspartate. Essential for terminating the postsynaptic action of glutamate by rapidly removing released glutamate from the synaptic cleft. Acts as a symport by cotransporting sodium (By similarity).</text>
</comment>
<comment type="subcellular location">
    <subcellularLocation>
        <location>Membrane</location>
        <topology>Multi-pass membrane protein</topology>
    </subcellularLocation>
</comment>
<comment type="alternative products">
    <event type="alternative splicing"/>
    <isoform>
        <id>Q10901-1</id>
        <name>a</name>
        <name>Glt-2</name>
        <sequence type="displayed"/>
    </isoform>
    <isoform>
        <id>Q10901-2</id>
        <name>b</name>
        <name>Glt-1</name>
        <sequence type="described" ref="VSP_006267"/>
    </isoform>
</comment>
<comment type="similarity">
    <text evidence="5">Belongs to the dicarboxylate/amino acid:cation symporter (DAACS) (TC 2.A.23) family.</text>
</comment>